<dbReference type="EC" id="4.3.1.19"/>
<dbReference type="EMBL" id="BA000017">
    <property type="protein sequence ID" value="BAB58223.1"/>
    <property type="molecule type" value="Genomic_DNA"/>
</dbReference>
<dbReference type="RefSeq" id="WP_000216856.1">
    <property type="nucleotide sequence ID" value="NC_002758.2"/>
</dbReference>
<dbReference type="SMR" id="Q99SJ1"/>
<dbReference type="KEGG" id="sav:SAV2061"/>
<dbReference type="HOGENOM" id="CLU_021152_4_2_9"/>
<dbReference type="PhylomeDB" id="Q99SJ1"/>
<dbReference type="UniPathway" id="UPA00047">
    <property type="reaction ID" value="UER00054"/>
</dbReference>
<dbReference type="Proteomes" id="UP000002481">
    <property type="component" value="Chromosome"/>
</dbReference>
<dbReference type="GO" id="GO:0003941">
    <property type="term" value="F:L-serine ammonia-lyase activity"/>
    <property type="evidence" value="ECO:0007669"/>
    <property type="project" value="TreeGrafter"/>
</dbReference>
<dbReference type="GO" id="GO:0030170">
    <property type="term" value="F:pyridoxal phosphate binding"/>
    <property type="evidence" value="ECO:0007669"/>
    <property type="project" value="InterPro"/>
</dbReference>
<dbReference type="GO" id="GO:0004794">
    <property type="term" value="F:threonine deaminase activity"/>
    <property type="evidence" value="ECO:0007669"/>
    <property type="project" value="UniProtKB-EC"/>
</dbReference>
<dbReference type="GO" id="GO:0009097">
    <property type="term" value="P:isoleucine biosynthetic process"/>
    <property type="evidence" value="ECO:0007669"/>
    <property type="project" value="UniProtKB-UniPathway"/>
</dbReference>
<dbReference type="GO" id="GO:0006565">
    <property type="term" value="P:L-serine catabolic process"/>
    <property type="evidence" value="ECO:0007669"/>
    <property type="project" value="TreeGrafter"/>
</dbReference>
<dbReference type="GO" id="GO:0006567">
    <property type="term" value="P:threonine catabolic process"/>
    <property type="evidence" value="ECO:0007669"/>
    <property type="project" value="TreeGrafter"/>
</dbReference>
<dbReference type="GO" id="GO:0006566">
    <property type="term" value="P:threonine metabolic process"/>
    <property type="evidence" value="ECO:0000250"/>
    <property type="project" value="UniProtKB"/>
</dbReference>
<dbReference type="CDD" id="cd04907">
    <property type="entry name" value="ACT_ThrD-I_2"/>
    <property type="match status" value="1"/>
</dbReference>
<dbReference type="CDD" id="cd01562">
    <property type="entry name" value="Thr-dehyd"/>
    <property type="match status" value="1"/>
</dbReference>
<dbReference type="FunFam" id="3.40.1020.10:FF:000002">
    <property type="entry name" value="L-threonine dehydratase"/>
    <property type="match status" value="1"/>
</dbReference>
<dbReference type="FunFam" id="3.40.50.1100:FF:000005">
    <property type="entry name" value="Threonine dehydratase catabolic"/>
    <property type="match status" value="1"/>
</dbReference>
<dbReference type="Gene3D" id="3.40.50.1100">
    <property type="match status" value="2"/>
</dbReference>
<dbReference type="Gene3D" id="3.40.1020.10">
    <property type="entry name" value="Biosynthetic Threonine Deaminase, Domain 3"/>
    <property type="match status" value="1"/>
</dbReference>
<dbReference type="InterPro" id="IPR045865">
    <property type="entry name" value="ACT-like_dom_sf"/>
</dbReference>
<dbReference type="InterPro" id="IPR011820">
    <property type="entry name" value="IlvA"/>
</dbReference>
<dbReference type="InterPro" id="IPR050147">
    <property type="entry name" value="Ser/Thr_Dehydratase"/>
</dbReference>
<dbReference type="InterPro" id="IPR000634">
    <property type="entry name" value="Ser/Thr_deHydtase_PyrdxlP-BS"/>
</dbReference>
<dbReference type="InterPro" id="IPR001721">
    <property type="entry name" value="TD_ACT-like"/>
</dbReference>
<dbReference type="InterPro" id="IPR038110">
    <property type="entry name" value="TD_ACT-like_sf"/>
</dbReference>
<dbReference type="InterPro" id="IPR001926">
    <property type="entry name" value="TrpB-like_PALP"/>
</dbReference>
<dbReference type="InterPro" id="IPR036052">
    <property type="entry name" value="TrpB-like_PALP_sf"/>
</dbReference>
<dbReference type="NCBIfam" id="NF006390">
    <property type="entry name" value="PRK08639.1"/>
    <property type="match status" value="1"/>
</dbReference>
<dbReference type="NCBIfam" id="TIGR02079">
    <property type="entry name" value="THD1"/>
    <property type="match status" value="1"/>
</dbReference>
<dbReference type="PANTHER" id="PTHR48078:SF11">
    <property type="entry name" value="THREONINE DEHYDRATASE, MITOCHONDRIAL"/>
    <property type="match status" value="1"/>
</dbReference>
<dbReference type="PANTHER" id="PTHR48078">
    <property type="entry name" value="THREONINE DEHYDRATASE, MITOCHONDRIAL-RELATED"/>
    <property type="match status" value="1"/>
</dbReference>
<dbReference type="Pfam" id="PF00291">
    <property type="entry name" value="PALP"/>
    <property type="match status" value="1"/>
</dbReference>
<dbReference type="Pfam" id="PF00585">
    <property type="entry name" value="Thr_dehydrat_C"/>
    <property type="match status" value="1"/>
</dbReference>
<dbReference type="SUPFAM" id="SSF55021">
    <property type="entry name" value="ACT-like"/>
    <property type="match status" value="1"/>
</dbReference>
<dbReference type="SUPFAM" id="SSF53686">
    <property type="entry name" value="Tryptophan synthase beta subunit-like PLP-dependent enzymes"/>
    <property type="match status" value="1"/>
</dbReference>
<dbReference type="PROSITE" id="PS51672">
    <property type="entry name" value="ACT_LIKE"/>
    <property type="match status" value="1"/>
</dbReference>
<dbReference type="PROSITE" id="PS00165">
    <property type="entry name" value="DEHYDRATASE_SER_THR"/>
    <property type="match status" value="1"/>
</dbReference>
<evidence type="ECO:0000250" key="1"/>
<evidence type="ECO:0000255" key="2">
    <source>
        <dbReference type="PROSITE-ProRule" id="PRU01008"/>
    </source>
</evidence>
<evidence type="ECO:0000305" key="3"/>
<keyword id="KW-0028">Amino-acid biosynthesis</keyword>
<keyword id="KW-0100">Branched-chain amino acid biosynthesis</keyword>
<keyword id="KW-0412">Isoleucine biosynthesis</keyword>
<keyword id="KW-0456">Lyase</keyword>
<keyword id="KW-0663">Pyridoxal phosphate</keyword>
<protein>
    <recommendedName>
        <fullName>L-threonine dehydratase biosynthetic IlvA</fullName>
        <ecNumber>4.3.1.19</ecNumber>
    </recommendedName>
    <alternativeName>
        <fullName>Threonine deaminase</fullName>
    </alternativeName>
</protein>
<comment type="function">
    <text evidence="1">Catalyzes the anaerobic formation of alpha-ketobutyrate and ammonia from threonine in a two-step reaction. The first step involved a dehydration of threonine and a production of enamine intermediates (aminocrotonate), which tautomerizes to its imine form (iminobutyrate). Both intermediates are unstable and short-lived. The second step is the nonenzymatic hydrolysis of the enamine/imine intermediates to form 2-ketobutyrate and free ammonia. In the low water environment of the cell, the second step is accelerated by RidA (By similarity).</text>
</comment>
<comment type="catalytic activity">
    <reaction>
        <text>L-threonine = 2-oxobutanoate + NH4(+)</text>
        <dbReference type="Rhea" id="RHEA:22108"/>
        <dbReference type="ChEBI" id="CHEBI:16763"/>
        <dbReference type="ChEBI" id="CHEBI:28938"/>
        <dbReference type="ChEBI" id="CHEBI:57926"/>
        <dbReference type="EC" id="4.3.1.19"/>
    </reaction>
</comment>
<comment type="cofactor">
    <cofactor evidence="1">
        <name>pyridoxal 5'-phosphate</name>
        <dbReference type="ChEBI" id="CHEBI:597326"/>
    </cofactor>
</comment>
<comment type="pathway">
    <text>Amino-acid biosynthesis; L-isoleucine biosynthesis; 2-oxobutanoate from L-threonine: step 1/1.</text>
</comment>
<comment type="subunit">
    <text evidence="1">Homotetramer.</text>
</comment>
<comment type="similarity">
    <text evidence="3">Belongs to the serine/threonine dehydratase family.</text>
</comment>
<feature type="chain" id="PRO_0000234307" description="L-threonine dehydratase biosynthetic IlvA">
    <location>
        <begin position="1"/>
        <end position="422"/>
    </location>
</feature>
<feature type="domain" description="ACT-like" evidence="2">
    <location>
        <begin position="339"/>
        <end position="413"/>
    </location>
</feature>
<feature type="binding site" evidence="1">
    <location>
        <position position="83"/>
    </location>
    <ligand>
        <name>pyridoxal 5'-phosphate</name>
        <dbReference type="ChEBI" id="CHEBI:597326"/>
    </ligand>
</feature>
<feature type="binding site" evidence="1">
    <location>
        <begin position="189"/>
        <end position="193"/>
    </location>
    <ligand>
        <name>pyridoxal 5'-phosphate</name>
        <dbReference type="ChEBI" id="CHEBI:597326"/>
    </ligand>
</feature>
<feature type="binding site" evidence="1">
    <location>
        <position position="315"/>
    </location>
    <ligand>
        <name>pyridoxal 5'-phosphate</name>
        <dbReference type="ChEBI" id="CHEBI:597326"/>
    </ligand>
</feature>
<feature type="modified residue" description="N6-(pyridoxal phosphate)lysine" evidence="1">
    <location>
        <position position="56"/>
    </location>
</feature>
<organism>
    <name type="scientific">Staphylococcus aureus (strain Mu50 / ATCC 700699)</name>
    <dbReference type="NCBI Taxonomy" id="158878"/>
    <lineage>
        <taxon>Bacteria</taxon>
        <taxon>Bacillati</taxon>
        <taxon>Bacillota</taxon>
        <taxon>Bacilli</taxon>
        <taxon>Bacillales</taxon>
        <taxon>Staphylococcaceae</taxon>
        <taxon>Staphylococcus</taxon>
    </lineage>
</organism>
<gene>
    <name type="primary">ilvA</name>
    <name type="ordered locus">SAV2061</name>
</gene>
<sequence>MTVKTTVSTKDIDEAFLRLKDIVKETPLQLDHYLSQKYDCKVYLKREDLQWVRSFKLRGAYNAISVLSDEAKSKGITCASAGNHAQGVAYTAKKLNLNAVIFMPVTTPLQKVNQVKFFGNSNVEVVLTGDTFDHCLAEALTYTSEHQMNFIDPFNNVHTISGQGTLAKEMLEQSKTDNVNFDYLFAAIGGGGLISGISTYFKTYSPTTKIIGVEPSGASSMYESVVVNNQVVTLPNIDKFVDGASVARVGDITFEIAKENVDDYVQVDEGAVCSTILDMYSKQAIVAEPAGALSVSALENYKDHIMGKTVVCVISGGNNDINRMKEIEERSLLYEEMKHYFILNFPQRPGALREFVNDVLGPQDDITKFEYLKKSSQNTGTVIIGIQLKDHDDLIQLKQRVNHFDPSNIYINENKMLYSLLI</sequence>
<proteinExistence type="inferred from homology"/>
<name>ILVA_STAAM</name>
<reference key="1">
    <citation type="journal article" date="2001" name="Lancet">
        <title>Whole genome sequencing of meticillin-resistant Staphylococcus aureus.</title>
        <authorList>
            <person name="Kuroda M."/>
            <person name="Ohta T."/>
            <person name="Uchiyama I."/>
            <person name="Baba T."/>
            <person name="Yuzawa H."/>
            <person name="Kobayashi I."/>
            <person name="Cui L."/>
            <person name="Oguchi A."/>
            <person name="Aoki K."/>
            <person name="Nagai Y."/>
            <person name="Lian J.-Q."/>
            <person name="Ito T."/>
            <person name="Kanamori M."/>
            <person name="Matsumaru H."/>
            <person name="Maruyama A."/>
            <person name="Murakami H."/>
            <person name="Hosoyama A."/>
            <person name="Mizutani-Ui Y."/>
            <person name="Takahashi N.K."/>
            <person name="Sawano T."/>
            <person name="Inoue R."/>
            <person name="Kaito C."/>
            <person name="Sekimizu K."/>
            <person name="Hirakawa H."/>
            <person name="Kuhara S."/>
            <person name="Goto S."/>
            <person name="Yabuzaki J."/>
            <person name="Kanehisa M."/>
            <person name="Yamashita A."/>
            <person name="Oshima K."/>
            <person name="Furuya K."/>
            <person name="Yoshino C."/>
            <person name="Shiba T."/>
            <person name="Hattori M."/>
            <person name="Ogasawara N."/>
            <person name="Hayashi H."/>
            <person name="Hiramatsu K."/>
        </authorList>
    </citation>
    <scope>NUCLEOTIDE SEQUENCE [LARGE SCALE GENOMIC DNA]</scope>
    <source>
        <strain>Mu50 / ATCC 700699</strain>
    </source>
</reference>
<accession>Q99SJ1</accession>